<reference key="1">
    <citation type="journal article" date="2002" name="Environ. Microbiol.">
        <title>Complete genome sequence and comparative analysis of the metabolically versatile Pseudomonas putida KT2440.</title>
        <authorList>
            <person name="Nelson K.E."/>
            <person name="Weinel C."/>
            <person name="Paulsen I.T."/>
            <person name="Dodson R.J."/>
            <person name="Hilbert H."/>
            <person name="Martins dos Santos V.A.P."/>
            <person name="Fouts D.E."/>
            <person name="Gill S.R."/>
            <person name="Pop M."/>
            <person name="Holmes M."/>
            <person name="Brinkac L.M."/>
            <person name="Beanan M.J."/>
            <person name="DeBoy R.T."/>
            <person name="Daugherty S.C."/>
            <person name="Kolonay J.F."/>
            <person name="Madupu R."/>
            <person name="Nelson W.C."/>
            <person name="White O."/>
            <person name="Peterson J.D."/>
            <person name="Khouri H.M."/>
            <person name="Hance I."/>
            <person name="Chris Lee P."/>
            <person name="Holtzapple E.K."/>
            <person name="Scanlan D."/>
            <person name="Tran K."/>
            <person name="Moazzez A."/>
            <person name="Utterback T.R."/>
            <person name="Rizzo M."/>
            <person name="Lee K."/>
            <person name="Kosack D."/>
            <person name="Moestl D."/>
            <person name="Wedler H."/>
            <person name="Lauber J."/>
            <person name="Stjepandic D."/>
            <person name="Hoheisel J."/>
            <person name="Straetz M."/>
            <person name="Heim S."/>
            <person name="Kiewitz C."/>
            <person name="Eisen J.A."/>
            <person name="Timmis K.N."/>
            <person name="Duesterhoeft A."/>
            <person name="Tuemmler B."/>
            <person name="Fraser C.M."/>
        </authorList>
    </citation>
    <scope>NUCLEOTIDE SEQUENCE [LARGE SCALE GENOMIC DNA]</scope>
    <source>
        <strain>ATCC 47054 / DSM 6125 / CFBP 8728 / NCIMB 11950 / KT2440</strain>
    </source>
</reference>
<organism>
    <name type="scientific">Pseudomonas putida (strain ATCC 47054 / DSM 6125 / CFBP 8728 / NCIMB 11950 / KT2440)</name>
    <dbReference type="NCBI Taxonomy" id="160488"/>
    <lineage>
        <taxon>Bacteria</taxon>
        <taxon>Pseudomonadati</taxon>
        <taxon>Pseudomonadota</taxon>
        <taxon>Gammaproteobacteria</taxon>
        <taxon>Pseudomonadales</taxon>
        <taxon>Pseudomonadaceae</taxon>
        <taxon>Pseudomonas</taxon>
    </lineage>
</organism>
<name>RL33_PSEPK</name>
<sequence length="51" mass="5990">MRELIRLVSSAGTGHFYTTDKNKRTTPDKIEIKKYDPVVRKHVVYKEAKIK</sequence>
<accession>Q88CA0</accession>
<feature type="chain" id="PRO_0000170200" description="Large ribosomal subunit protein bL33">
    <location>
        <begin position="1"/>
        <end position="51"/>
    </location>
</feature>
<comment type="similarity">
    <text evidence="1">Belongs to the bacterial ribosomal protein bL33 family.</text>
</comment>
<proteinExistence type="inferred from homology"/>
<evidence type="ECO:0000255" key="1">
    <source>
        <dbReference type="HAMAP-Rule" id="MF_00294"/>
    </source>
</evidence>
<evidence type="ECO:0000305" key="2"/>
<dbReference type="EMBL" id="AE015451">
    <property type="protein sequence ID" value="AAN70846.1"/>
    <property type="molecule type" value="Genomic_DNA"/>
</dbReference>
<dbReference type="RefSeq" id="NP_747382.1">
    <property type="nucleotide sequence ID" value="NC_002947.4"/>
</dbReference>
<dbReference type="RefSeq" id="WP_003253507.1">
    <property type="nucleotide sequence ID" value="NZ_CP169744.1"/>
</dbReference>
<dbReference type="SMR" id="Q88CA0"/>
<dbReference type="STRING" id="160488.PP_5281"/>
<dbReference type="PaxDb" id="160488-PP_5281"/>
<dbReference type="GeneID" id="97170651"/>
<dbReference type="KEGG" id="ppu:PP_5281"/>
<dbReference type="PATRIC" id="fig|160488.4.peg.5634"/>
<dbReference type="eggNOG" id="COG0267">
    <property type="taxonomic scope" value="Bacteria"/>
</dbReference>
<dbReference type="HOGENOM" id="CLU_190949_1_1_6"/>
<dbReference type="OrthoDB" id="21586at2"/>
<dbReference type="PhylomeDB" id="Q88CA0"/>
<dbReference type="BioCyc" id="PPUT160488:G1G01-5639-MONOMER"/>
<dbReference type="Proteomes" id="UP000000556">
    <property type="component" value="Chromosome"/>
</dbReference>
<dbReference type="GO" id="GO:0022625">
    <property type="term" value="C:cytosolic large ribosomal subunit"/>
    <property type="evidence" value="ECO:0007669"/>
    <property type="project" value="TreeGrafter"/>
</dbReference>
<dbReference type="GO" id="GO:0003735">
    <property type="term" value="F:structural constituent of ribosome"/>
    <property type="evidence" value="ECO:0007669"/>
    <property type="project" value="InterPro"/>
</dbReference>
<dbReference type="GO" id="GO:0006412">
    <property type="term" value="P:translation"/>
    <property type="evidence" value="ECO:0007669"/>
    <property type="project" value="UniProtKB-UniRule"/>
</dbReference>
<dbReference type="FunFam" id="2.20.28.120:FF:000001">
    <property type="entry name" value="50S ribosomal protein L33"/>
    <property type="match status" value="1"/>
</dbReference>
<dbReference type="Gene3D" id="2.20.28.120">
    <property type="entry name" value="Ribosomal protein L33"/>
    <property type="match status" value="1"/>
</dbReference>
<dbReference type="HAMAP" id="MF_00294">
    <property type="entry name" value="Ribosomal_bL33"/>
    <property type="match status" value="1"/>
</dbReference>
<dbReference type="InterPro" id="IPR001705">
    <property type="entry name" value="Ribosomal_bL33"/>
</dbReference>
<dbReference type="InterPro" id="IPR018264">
    <property type="entry name" value="Ribosomal_bL33_CS"/>
</dbReference>
<dbReference type="InterPro" id="IPR038584">
    <property type="entry name" value="Ribosomal_bL33_sf"/>
</dbReference>
<dbReference type="InterPro" id="IPR011332">
    <property type="entry name" value="Ribosomal_zn-bd"/>
</dbReference>
<dbReference type="NCBIfam" id="NF001860">
    <property type="entry name" value="PRK00595.1"/>
    <property type="match status" value="1"/>
</dbReference>
<dbReference type="NCBIfam" id="TIGR01023">
    <property type="entry name" value="rpmG_bact"/>
    <property type="match status" value="1"/>
</dbReference>
<dbReference type="PANTHER" id="PTHR15238">
    <property type="entry name" value="54S RIBOSOMAL PROTEIN L39, MITOCHONDRIAL"/>
    <property type="match status" value="1"/>
</dbReference>
<dbReference type="PANTHER" id="PTHR15238:SF1">
    <property type="entry name" value="LARGE RIBOSOMAL SUBUNIT PROTEIN BL33M"/>
    <property type="match status" value="1"/>
</dbReference>
<dbReference type="Pfam" id="PF00471">
    <property type="entry name" value="Ribosomal_L33"/>
    <property type="match status" value="1"/>
</dbReference>
<dbReference type="SUPFAM" id="SSF57829">
    <property type="entry name" value="Zn-binding ribosomal proteins"/>
    <property type="match status" value="1"/>
</dbReference>
<dbReference type="PROSITE" id="PS00582">
    <property type="entry name" value="RIBOSOMAL_L33"/>
    <property type="match status" value="1"/>
</dbReference>
<gene>
    <name evidence="1" type="primary">rpmG</name>
    <name type="ordered locus">PP_5281</name>
</gene>
<keyword id="KW-1185">Reference proteome</keyword>
<keyword id="KW-0687">Ribonucleoprotein</keyword>
<keyword id="KW-0689">Ribosomal protein</keyword>
<protein>
    <recommendedName>
        <fullName evidence="1">Large ribosomal subunit protein bL33</fullName>
    </recommendedName>
    <alternativeName>
        <fullName evidence="2">50S ribosomal protein L33</fullName>
    </alternativeName>
</protein>